<keyword id="KW-0007">Acetylation</keyword>
<keyword id="KW-0067">ATP-binding</keyword>
<keyword id="KW-0090">Biological rhythms</keyword>
<keyword id="KW-0963">Cytoplasm</keyword>
<keyword id="KW-0238">DNA-binding</keyword>
<keyword id="KW-0413">Isomerase</keyword>
<keyword id="KW-1017">Isopeptide bond</keyword>
<keyword id="KW-0460">Magnesium</keyword>
<keyword id="KW-0479">Metal-binding</keyword>
<keyword id="KW-0547">Nucleotide-binding</keyword>
<keyword id="KW-0539">Nucleus</keyword>
<keyword id="KW-0597">Phosphoprotein</keyword>
<keyword id="KW-1185">Reference proteome</keyword>
<keyword id="KW-0799">Topoisomerase</keyword>
<keyword id="KW-0832">Ubl conjugation</keyword>
<evidence type="ECO:0000250" key="1">
    <source>
        <dbReference type="UniProtKB" id="P06786"/>
    </source>
</evidence>
<evidence type="ECO:0000250" key="2">
    <source>
        <dbReference type="UniProtKB" id="P11388"/>
    </source>
</evidence>
<evidence type="ECO:0000250" key="3">
    <source>
        <dbReference type="UniProtKB" id="P41516"/>
    </source>
</evidence>
<evidence type="ECO:0000250" key="4">
    <source>
        <dbReference type="UniProtKB" id="Q01320"/>
    </source>
</evidence>
<evidence type="ECO:0000255" key="5">
    <source>
        <dbReference type="PROSITE-ProRule" id="PRU00995"/>
    </source>
</evidence>
<evidence type="ECO:0000255" key="6">
    <source>
        <dbReference type="PROSITE-ProRule" id="PRU01384"/>
    </source>
</evidence>
<evidence type="ECO:0000256" key="7">
    <source>
        <dbReference type="SAM" id="MobiDB-lite"/>
    </source>
</evidence>
<evidence type="ECO:0000305" key="8"/>
<reference key="1">
    <citation type="submission" date="1997-12" db="EMBL/GenBank/DDBJ databases">
        <authorList>
            <person name="Ito Y."/>
        </authorList>
    </citation>
    <scope>NUCLEOTIDE SEQUENCE [MRNA]</scope>
    <source>
        <tissue>Muscle</tissue>
    </source>
</reference>
<sequence length="1533" mass="174307">MEVSPLQPVNENMQVNKTKKNEEAKKRLSIERIYQKKTQLEHILLRPDTYIGSVESVTQQMWVYDEDIGINYREVTFVPGLYKIFDEILVNAADNKQRDPKMSCIRVTIDPENNLISIWNNGKGIPVVEHKVEKMYVPALIFGQLLTSSNYDDEEKKVTGGRNGYGAKLCNIFSTKFTVETASREYKKMFKQTWMDNMGRAGEMELKPFNGEDYTCITFHPDLSKFKMQSLDKDIVALMVRRAYDIAGSTKDVKVFLNGNKLPVKGFRSYVDLYLKDKVDETGNPLKIIHEQVNHRWEVCLTMSEKGFQQISFVNSIATSKGGRHVDYVADQIVAKLVDVVKKKNKGGVAVKAHQVKNHMWIFVNALIENPTFDSQTKENMTLQVKSFGSTCQLSEKFIKAAIGCGIVESILNWVKFKAQVQLNKKCSAVKHNRIKGIPKLDDANDAGGRNSTECTLILTEGDSAKTLAVSGLGVVGRDKYGVFPLRGKILNVREASHKQIMENAEINNIIKIVGLQYKKNYEDEDSLKTLRYGKIMIMTDQDQDGSHIKGLLINFIHHNWPSLLRHRFLEEFITPIVKVSKNKQEMAFYSLPEFEEWKSSTPNHKKWKVKYYKGLGTSTSKEAKEYFADMKRHRIQFKYSGPEDDAAISLAFSKKQIDDRKEWLTHFMEDRRQRKLLGLPEDYLYGQTTTYLTYNDFINKELILFSNSDNERSIPSMVDGLKPGQRKVLFTCFKRNDKREVKVAQLAGSVAEMSSYHHGEMSLMMTIINLAQNFVGSNNLNLLQPIGQFGTRLHGGKDSASPRYIFTMLSPLARLLFPPKDDHTLKFLYDDNQRVEPEWYIPIIPMVLINGAEGIGTGWSCKIPNFDVREVVNNIRLLMDGEEPLPMLPSYKNFKGTIEELAPNQYVISGEVAILNSTTIEISELPIRTWTQTYKEQVLEPMLNGTEKTPPLITDYREYHTDTTVKFVVKMTEEKLAEAERVGLHKVFKLQTSLTCNSMVLFDHVGCLKKYDTVLDILRDFFELRLKYYGLRKEWLLGMLGAESAKLNNQARFILEKIDGKIIIENKPKKELIKVLIQRGYDSDPVKAWKEAQQKVPDEEENEESDNEKEADKSDSVADSGPTFNYLLDMPLWYLTKEKKDELCKLRNEKEQELETLKRKSPSDLWKEDLAAFIEELEAVEAKEKQDEQIGLPGKGGKAKGKKTQMAEVLPSPCGKRVIPRVTVEMKAEAEKKIKKKIKSENTEGSPQEDGMEVEGLKQRLEKKQKREPGTKTKKQTTLPFKPIKKAKKRNPWSDSESDISSDESNFNVPPREKEPRRAAAKTKFTVDLDSDEDFSDADEKTRDEDFVPSDTSPQKAETSPKHTNKEPKPQKSTPSVSDFDADDAKDNVPPSPSSPVADFPAVTETIKPVSKKNVTVKKTAAKSQSSTSTTGAKKRAAPKGAKKDPDLDSDVSKKPNPPKPKGRRKRKPSTSDDSDSNFEKMISKAVTSKKPKGESDDFHLDLDLAVASRAKSGRTKKPIKYLEESDEDDLF</sequence>
<accession>O46374</accession>
<comment type="function">
    <text evidence="2 4">Key decatenating enzyme that alters DNA topology by binding to two double-stranded DNA molecules, generating a double-stranded break in one of the strands, passing the intact strand through the broken strand, and religating the broken strand (By similarity). May play a role in regulating the period length of BMAL1 transcriptional oscillation (By similarity).</text>
</comment>
<comment type="catalytic activity">
    <reaction evidence="5">
        <text>ATP-dependent breakage, passage and rejoining of double-stranded DNA.</text>
        <dbReference type="EC" id="5.6.2.2"/>
    </reaction>
</comment>
<comment type="cofactor">
    <cofactor evidence="5">
        <name>Mg(2+)</name>
        <dbReference type="ChEBI" id="CHEBI:18420"/>
    </cofactor>
    <cofactor evidence="5">
        <name>Mn(2+)</name>
        <dbReference type="ChEBI" id="CHEBI:29035"/>
    </cofactor>
    <cofactor evidence="5">
        <name>Ca(2+)</name>
        <dbReference type="ChEBI" id="CHEBI:29108"/>
    </cofactor>
    <text evidence="5">Binds two Mg(2+) per subunit. The magnesium ions form salt bridges with both the protein and the DNA. Can also accept other divalent metal cations, such as Mn(2+) or Ca(2+).</text>
</comment>
<comment type="subunit">
    <text evidence="2 3 4">Homodimer (By similarity). Interacts with COPS5 (By similarity). Interacts with RECQL5; this stimulates DNA decatenation (By similarity). Interacts with SETMAR; stimulates the topoisomerase activity (By similarity). Interacts with DHX9; this interaction occurs in a E2 enzyme UBE2I- and RNA-dependent manner, negatively regulates DHX9-mediated double-stranded DNA and RNA duplex helicase activity and stimulates TOP2A-mediated supercoiled DNA relaxation activity (By similarity). Interacts with HNRNPU (via C-terminus); this interaction protects the topoisomerase TOP2A from degradation and positively regulates the relaxation of supercoiled DNA in a RNA-dependent manner (By similarity). Interacts with MCM3AP (By similarity). Interacts with ERCC6 (By similarity). Interacts with PLSCR1 (By similarity). Interacts with GCNA; this interaction allows the resolution of topoisomerase II (TOP2A) DNA-protein cross-links (By similarity). Interacts with POL1RA/RPA1 (via dock II) and UBTF in the context of Pol I complex; may assist Pol I transcription initiation by releasing supercoils occurring during DNA unwinding. Interacts with TPRN; TPRN interacts with a number of DNA damage response proteins, is recruited to sites of DNA damage and may play a role in DNA damage repair (By similarity).</text>
</comment>
<comment type="subcellular location">
    <subcellularLocation>
        <location evidence="2">Cytoplasm</location>
    </subcellularLocation>
    <subcellularLocation>
        <location evidence="2">Nucleus</location>
        <location evidence="2">Nucleoplasm</location>
    </subcellularLocation>
    <subcellularLocation>
        <location evidence="2">Nucleus</location>
    </subcellularLocation>
    <subcellularLocation>
        <location evidence="2">Nucleus</location>
        <location evidence="2">Nucleolus</location>
    </subcellularLocation>
</comment>
<comment type="PTM">
    <text evidence="2">Phosphorylation has no effect on catalytic activity (By similarity). However, phosphorylation at Ser-1106 by CSNK1D/CK1 promotes DNA cleavable complex formation (By similarity).</text>
</comment>
<comment type="miscellaneous">
    <text>Eukaryotic topoisomerase I and II can relax both negative and positive supercoils, whereas prokaryotic enzymes relax only negative supercoils.</text>
</comment>
<comment type="similarity">
    <text evidence="8">Belongs to the type II topoisomerase family.</text>
</comment>
<protein>
    <recommendedName>
        <fullName>DNA topoisomerase 2-alpha</fullName>
        <ecNumber evidence="5">5.6.2.2</ecNumber>
    </recommendedName>
    <alternativeName>
        <fullName>DNA topoisomerase II, alpha isozyme</fullName>
    </alternativeName>
</protein>
<name>TOP2A_PIG</name>
<gene>
    <name type="primary">TOP2A</name>
</gene>
<proteinExistence type="evidence at transcript level"/>
<feature type="chain" id="PRO_0000145365" description="DNA topoisomerase 2-alpha">
    <location>
        <begin position="1"/>
        <end position="1533"/>
    </location>
</feature>
<feature type="domain" description="Toprim" evidence="5">
    <location>
        <begin position="455"/>
        <end position="572"/>
    </location>
</feature>
<feature type="domain" description="Topo IIA-type catalytic" evidence="6">
    <location>
        <begin position="715"/>
        <end position="1171"/>
    </location>
</feature>
<feature type="region of interest" description="Disordered" evidence="7">
    <location>
        <begin position="1"/>
        <end position="22"/>
    </location>
</feature>
<feature type="region of interest" description="Interaction with DNA" evidence="2">
    <location>
        <begin position="342"/>
        <end position="344"/>
    </location>
</feature>
<feature type="region of interest" description="Interaction with DNA" evidence="2">
    <location>
        <begin position="990"/>
        <end position="999"/>
    </location>
</feature>
<feature type="region of interest" description="Disordered" evidence="7">
    <location>
        <begin position="1090"/>
        <end position="1121"/>
    </location>
</feature>
<feature type="region of interest" description="Disordered" evidence="7">
    <location>
        <begin position="1183"/>
        <end position="1215"/>
    </location>
</feature>
<feature type="region of interest" description="Disordered" evidence="7">
    <location>
        <begin position="1231"/>
        <end position="1533"/>
    </location>
</feature>
<feature type="region of interest" description="Interaction with PLSCR1" evidence="2">
    <location>
        <begin position="1435"/>
        <end position="1441"/>
    </location>
</feature>
<feature type="compositionally biased region" description="Polar residues" evidence="7">
    <location>
        <begin position="7"/>
        <end position="16"/>
    </location>
</feature>
<feature type="compositionally biased region" description="Acidic residues" evidence="7">
    <location>
        <begin position="1099"/>
        <end position="1108"/>
    </location>
</feature>
<feature type="compositionally biased region" description="Basic and acidic residues" evidence="7">
    <location>
        <begin position="1256"/>
        <end position="1272"/>
    </location>
</feature>
<feature type="compositionally biased region" description="Basic and acidic residues" evidence="7">
    <location>
        <begin position="1360"/>
        <end position="1371"/>
    </location>
</feature>
<feature type="compositionally biased region" description="Low complexity" evidence="7">
    <location>
        <begin position="1409"/>
        <end position="1433"/>
    </location>
</feature>
<feature type="compositionally biased region" description="Basic and acidic residues" evidence="7">
    <location>
        <begin position="1443"/>
        <end position="1455"/>
    </location>
</feature>
<feature type="compositionally biased region" description="Basic and acidic residues" evidence="7">
    <location>
        <begin position="1493"/>
        <end position="1504"/>
    </location>
</feature>
<feature type="active site" description="O-(5'-phospho-DNA)-tyrosine intermediate" evidence="6">
    <location>
        <position position="805"/>
    </location>
</feature>
<feature type="binding site" evidence="2">
    <location>
        <position position="91"/>
    </location>
    <ligand>
        <name>ATP</name>
        <dbReference type="ChEBI" id="CHEBI:30616"/>
    </ligand>
</feature>
<feature type="binding site" evidence="2">
    <location>
        <position position="120"/>
    </location>
    <ligand>
        <name>ATP</name>
        <dbReference type="ChEBI" id="CHEBI:30616"/>
    </ligand>
</feature>
<feature type="binding site" evidence="2">
    <location>
        <begin position="148"/>
        <end position="150"/>
    </location>
    <ligand>
        <name>ATP</name>
        <dbReference type="ChEBI" id="CHEBI:30616"/>
    </ligand>
</feature>
<feature type="binding site" evidence="2">
    <location>
        <begin position="161"/>
        <end position="168"/>
    </location>
    <ligand>
        <name>ATP</name>
        <dbReference type="ChEBI" id="CHEBI:30616"/>
    </ligand>
</feature>
<feature type="binding site" evidence="2">
    <location>
        <begin position="376"/>
        <end position="378"/>
    </location>
    <ligand>
        <name>ATP</name>
        <dbReference type="ChEBI" id="CHEBI:30616"/>
    </ligand>
</feature>
<feature type="binding site" evidence="5">
    <location>
        <position position="461"/>
    </location>
    <ligand>
        <name>Mg(2+)</name>
        <dbReference type="ChEBI" id="CHEBI:18420"/>
        <label>1</label>
        <note>catalytic</note>
    </ligand>
</feature>
<feature type="binding site" evidence="5">
    <location>
        <position position="541"/>
    </location>
    <ligand>
        <name>Mg(2+)</name>
        <dbReference type="ChEBI" id="CHEBI:18420"/>
        <label>1</label>
        <note>catalytic</note>
    </ligand>
</feature>
<feature type="binding site" evidence="5">
    <location>
        <position position="541"/>
    </location>
    <ligand>
        <name>Mg(2+)</name>
        <dbReference type="ChEBI" id="CHEBI:18420"/>
        <label>2</label>
    </ligand>
</feature>
<feature type="binding site" evidence="5">
    <location>
        <position position="543"/>
    </location>
    <ligand>
        <name>Mg(2+)</name>
        <dbReference type="ChEBI" id="CHEBI:18420"/>
        <label>2</label>
    </ligand>
</feature>
<feature type="site" description="Interaction with DNA" evidence="5">
    <location>
        <position position="489"/>
    </location>
</feature>
<feature type="site" description="Interaction with DNA" evidence="5">
    <location>
        <position position="492"/>
    </location>
</feature>
<feature type="site" description="Interaction with DNA" evidence="5">
    <location>
        <position position="661"/>
    </location>
</feature>
<feature type="site" description="Interaction with DNA" evidence="5">
    <location>
        <position position="662"/>
    </location>
</feature>
<feature type="site" description="Interaction with DNA" evidence="5">
    <location>
        <position position="723"/>
    </location>
</feature>
<feature type="site" description="Interaction with DNA" evidence="5">
    <location>
        <position position="757"/>
    </location>
</feature>
<feature type="site" description="Interaction with DNA" evidence="5">
    <location>
        <position position="763"/>
    </location>
</feature>
<feature type="site" description="Transition state stabilizer" evidence="1">
    <location>
        <position position="804"/>
    </location>
</feature>
<feature type="site" description="Important for DNA bending; intercalates between base pairs of target DNA" evidence="1">
    <location>
        <position position="856"/>
    </location>
</feature>
<feature type="site" description="Interaction with DNA" evidence="5">
    <location>
        <position position="931"/>
    </location>
</feature>
<feature type="modified residue" description="N-acetylmethionine" evidence="2">
    <location>
        <position position="1"/>
    </location>
</feature>
<feature type="modified residue" description="Phosphoserine" evidence="2">
    <location>
        <position position="4"/>
    </location>
</feature>
<feature type="modified residue" description="Phosphothreonine" evidence="2">
    <location>
        <position position="282"/>
    </location>
</feature>
<feature type="modified residue" description="Phosphoserine; by CK1" evidence="2">
    <location>
        <position position="1106"/>
    </location>
</feature>
<feature type="modified residue" description="Phosphothreonine" evidence="2">
    <location>
        <position position="1205"/>
    </location>
</feature>
<feature type="modified residue" description="Phosphoserine" evidence="2">
    <location>
        <position position="1213"/>
    </location>
</feature>
<feature type="modified residue" description="Phosphothreonine" evidence="2">
    <location>
        <position position="1244"/>
    </location>
</feature>
<feature type="modified residue" description="Phosphoserine" evidence="2">
    <location>
        <position position="1247"/>
    </location>
</feature>
<feature type="modified residue" description="Phosphoserine" evidence="2">
    <location>
        <position position="1295"/>
    </location>
</feature>
<feature type="modified residue" description="Phosphoserine" evidence="2">
    <location>
        <position position="1297"/>
    </location>
</feature>
<feature type="modified residue" description="Phosphoserine" evidence="2">
    <location>
        <position position="1299"/>
    </location>
</feature>
<feature type="modified residue" description="Phosphoserine" evidence="2">
    <location>
        <position position="1302"/>
    </location>
</feature>
<feature type="modified residue" description="Phosphothreonine" evidence="4">
    <location>
        <position position="1327"/>
    </location>
</feature>
<feature type="modified residue" description="Phosphoserine" evidence="2">
    <location>
        <position position="1332"/>
    </location>
</feature>
<feature type="modified residue" description="Phosphoserine" evidence="2">
    <location>
        <position position="1337"/>
    </location>
</feature>
<feature type="modified residue" description="Phosphothreonine" evidence="2">
    <location>
        <position position="1343"/>
    </location>
</feature>
<feature type="modified residue" description="Phosphoserine" evidence="2">
    <location>
        <position position="1351"/>
    </location>
</feature>
<feature type="modified residue" description="Phosphoserine" evidence="2">
    <location>
        <position position="1354"/>
    </location>
</feature>
<feature type="modified residue" description="Phosphoserine" evidence="2">
    <location>
        <position position="1374"/>
    </location>
</feature>
<feature type="modified residue" description="Phosphoserine" evidence="2">
    <location>
        <position position="1377"/>
    </location>
</feature>
<feature type="modified residue" description="Phosphoserine" evidence="2">
    <location>
        <position position="1393"/>
    </location>
</feature>
<feature type="modified residue" description="Phosphoserine" evidence="2">
    <location>
        <position position="1395"/>
    </location>
</feature>
<feature type="modified residue" description="N6-acetyllysine; alternate" evidence="4">
    <location>
        <position position="1424"/>
    </location>
</feature>
<feature type="modified residue" description="N6-acetyllysine; alternate" evidence="4">
    <location>
        <position position="1444"/>
    </location>
</feature>
<feature type="modified residue" description="Phosphoserine" evidence="2">
    <location>
        <position position="1451"/>
    </location>
</feature>
<feature type="modified residue" description="Phosphoserine" evidence="2">
    <location>
        <position position="1471"/>
    </location>
</feature>
<feature type="modified residue" description="Phosphothreonine" evidence="2">
    <location>
        <position position="1472"/>
    </location>
</feature>
<feature type="modified residue" description="Phosphoserine" evidence="2">
    <location>
        <position position="1473"/>
    </location>
</feature>
<feature type="modified residue" description="Phosphoserine" evidence="2">
    <location>
        <position position="1476"/>
    </location>
</feature>
<feature type="modified residue" description="Phosphoserine" evidence="2">
    <location>
        <position position="1478"/>
    </location>
</feature>
<feature type="modified residue" description="Phosphoserine" evidence="2">
    <location>
        <position position="1497"/>
    </location>
</feature>
<feature type="modified residue" description="Phosphoserine" evidence="2">
    <location>
        <position position="1527"/>
    </location>
</feature>
<feature type="cross-link" description="Glycyl lysine isopeptide (Lys-Gly) (interchain with G-Cter in SUMO2)" evidence="2">
    <location>
        <position position="17"/>
    </location>
</feature>
<feature type="cross-link" description="Glycyl lysine isopeptide (Lys-Gly) (interchain with G-Cter in SUMO2)" evidence="2">
    <location>
        <position position="156"/>
    </location>
</feature>
<feature type="cross-link" description="Glycyl lysine isopeptide (Lys-Gly) (interchain with G-Cter in SUMO2)" evidence="2">
    <location>
        <position position="157"/>
    </location>
</feature>
<feature type="cross-link" description="Glycyl lysine isopeptide (Lys-Gly) (interchain with G-Cter in SUMO2)" evidence="2">
    <location>
        <position position="261"/>
    </location>
</feature>
<feature type="cross-link" description="Glycyl lysine isopeptide (Lys-Gly) (interchain with G-Cter in SUMO2)" evidence="2">
    <location>
        <position position="352"/>
    </location>
</feature>
<feature type="cross-link" description="Glycyl lysine isopeptide (Lys-Gly) (interchain with G-Cter in SUMO2)" evidence="2">
    <location>
        <position position="386"/>
    </location>
</feature>
<feature type="cross-link" description="Glycyl lysine isopeptide (Lys-Gly) (interchain with G-Cter in SUMO2)" evidence="2">
    <location>
        <position position="397"/>
    </location>
</feature>
<feature type="cross-link" description="Glycyl lysine isopeptide (Lys-Gly) (interchain with G-Cter in SUMO2)" evidence="2">
    <location>
        <position position="416"/>
    </location>
</feature>
<feature type="cross-link" description="Glycyl lysine isopeptide (Lys-Gly) (interchain with G-Cter in SUMO2)" evidence="2">
    <location>
        <position position="418"/>
    </location>
</feature>
<feature type="cross-link" description="Glycyl lysine isopeptide (Lys-Gly) (interchain with G-Cter in SUMO2)" evidence="2">
    <location>
        <position position="425"/>
    </location>
</feature>
<feature type="cross-link" description="Glycyl lysine isopeptide (Lys-Gly) (interchain with G-Cter in SUMO2)" evidence="2">
    <location>
        <position position="440"/>
    </location>
</feature>
<feature type="cross-link" description="Glycyl lysine isopeptide (Lys-Gly) (interchain with G-Cter in SUMO2)" evidence="2">
    <location>
        <position position="466"/>
    </location>
</feature>
<feature type="cross-link" description="Glycyl lysine isopeptide (Lys-Gly) (interchain with G-Cter in SUMO2)" evidence="2">
    <location>
        <position position="480"/>
    </location>
</feature>
<feature type="cross-link" description="Glycyl lysine isopeptide (Lys-Gly) (interchain with G-Cter in SUMO2)" evidence="2">
    <location>
        <position position="529"/>
    </location>
</feature>
<feature type="cross-link" description="Glycyl lysine isopeptide (Lys-Gly) (interchain with G-Cter in SUMO2)" evidence="2">
    <location>
        <position position="584"/>
    </location>
</feature>
<feature type="cross-link" description="Glycyl lysine isopeptide (Lys-Gly) (interchain with G-Cter in SUMO2)" evidence="2">
    <location>
        <position position="599"/>
    </location>
</feature>
<feature type="cross-link" description="Glycyl lysine isopeptide (Lys-Gly) (interchain with G-Cter in SUMO2)" evidence="2">
    <location>
        <position position="614"/>
    </location>
</feature>
<feature type="cross-link" description="Glycyl lysine isopeptide (Lys-Gly) (interchain with G-Cter in SUMO2)" evidence="2">
    <location>
        <position position="622"/>
    </location>
</feature>
<feature type="cross-link" description="Glycyl lysine isopeptide (Lys-Gly) (interchain with G-Cter in SUMO2)" evidence="2">
    <location>
        <position position="625"/>
    </location>
</feature>
<feature type="cross-link" description="Glycyl lysine isopeptide (Lys-Gly) (interchain with G-Cter in SUMO2)" evidence="2">
    <location>
        <position position="632"/>
    </location>
</feature>
<feature type="cross-link" description="Glycyl lysine isopeptide (Lys-Gly) (interchain with G-Cter in SUMO2)" evidence="2">
    <location>
        <position position="639"/>
    </location>
</feature>
<feature type="cross-link" description="Glycyl lysine isopeptide (Lys-Gly) (interchain with G-Cter in SUMO2)" evidence="2">
    <location>
        <position position="655"/>
    </location>
</feature>
<feature type="cross-link" description="Glycyl lysine isopeptide (Lys-Gly) (interchain with G-Cter in SUMO2)" evidence="2">
    <location>
        <position position="662"/>
    </location>
</feature>
<feature type="cross-link" description="Glycyl lysine isopeptide (Lys-Gly) (interchain with G-Cter in SUMO2)" evidence="2">
    <location>
        <position position="676"/>
    </location>
</feature>
<feature type="cross-link" description="Glycyl lysine isopeptide (Lys-Gly) (interchain with G-Cter in SUMO2)" evidence="2">
    <location>
        <position position="1075"/>
    </location>
</feature>
<feature type="cross-link" description="Glycyl lysine isopeptide (Lys-Gly) (interchain with G-Cter in SUMO2)" evidence="2">
    <location>
        <position position="1114"/>
    </location>
</feature>
<feature type="cross-link" description="Glycyl lysine isopeptide (Lys-Gly) (interchain with G-Cter in SUMO2)" evidence="2">
    <location>
        <position position="1196"/>
    </location>
</feature>
<feature type="cross-link" description="Glycyl lysine isopeptide (Lys-Gly) (interchain with G-Cter in SUMO2)" evidence="2">
    <location>
        <position position="1204"/>
    </location>
</feature>
<feature type="cross-link" description="Glycyl lysine isopeptide (Lys-Gly) (interchain with G-Cter in SUMO2)" evidence="2">
    <location>
        <position position="1228"/>
    </location>
</feature>
<feature type="cross-link" description="Glycyl lysine isopeptide (Lys-Gly) (interchain with G-Cter in SUMO1); alternate" evidence="2">
    <location>
        <position position="1240"/>
    </location>
</feature>
<feature type="cross-link" description="Glycyl lysine isopeptide (Lys-Gly) (interchain with G-Cter in SUMO2); alternate" evidence="2">
    <location>
        <position position="1240"/>
    </location>
</feature>
<feature type="cross-link" description="Glycyl lysine isopeptide (Lys-Gly) (interchain with G-Cter in SUMO2)" evidence="2">
    <location>
        <position position="1259"/>
    </location>
</feature>
<feature type="cross-link" description="Glycyl lysine isopeptide (Lys-Gly) (interchain with G-Cter in SUMO2)" evidence="2">
    <location>
        <position position="1276"/>
    </location>
</feature>
<feature type="cross-link" description="Glycyl lysine isopeptide (Lys-Gly) (interchain with G-Cter in SUMO2)" evidence="2">
    <location>
        <position position="1283"/>
    </location>
</feature>
<feature type="cross-link" description="Glycyl lysine isopeptide (Lys-Gly) (interchain with G-Cter in SUMO2)" evidence="2">
    <location>
        <position position="1286"/>
    </location>
</feature>
<feature type="cross-link" description="Glycyl lysine isopeptide (Lys-Gly) (interchain with G-Cter in SUMO2)" evidence="2">
    <location>
        <position position="1363"/>
    </location>
</feature>
<feature type="cross-link" description="Glycyl lysine isopeptide (Lys-Gly) (interchain with G-Cter in SUMO2)" evidence="2">
    <location>
        <position position="1367"/>
    </location>
</feature>
<feature type="cross-link" description="Glycyl lysine isopeptide (Lys-Gly) (interchain with G-Cter in SUMO2)" evidence="2">
    <location>
        <position position="1373"/>
    </location>
</feature>
<feature type="cross-link" description="Glycyl lysine isopeptide (Lys-Gly) (interchain with G-Cter in SUMO2)" evidence="2">
    <location>
        <position position="1387"/>
    </location>
</feature>
<feature type="cross-link" description="Glycyl lysine isopeptide (Lys-Gly) (interchain with G-Cter in SUMO2); alternate" evidence="2">
    <location>
        <position position="1424"/>
    </location>
</feature>
<feature type="cross-link" description="Glycyl lysine isopeptide (Lys-Gly) (interchain with G-Cter in SUMO2); alternate" evidence="2">
    <location>
        <position position="1444"/>
    </location>
</feature>
<feature type="cross-link" description="Glycyl lysine isopeptide (Lys-Gly) (interchain with G-Cter in SUMO2)" evidence="2">
    <location>
        <position position="1456"/>
    </location>
</feature>
<feature type="cross-link" description="Glycyl lysine isopeptide (Lys-Gly) (interchain with G-Cter in SUMO2)" evidence="2">
    <location>
        <position position="1461"/>
    </location>
</feature>
<feature type="cross-link" description="Glycyl lysine isopeptide (Lys-Gly) (interchain with G-Cter in SUMO2)" evidence="2">
    <location>
        <position position="1486"/>
    </location>
</feature>
<feature type="cross-link" description="Glycyl lysine isopeptide (Lys-Gly) (interchain with G-Cter in SUMO2)" evidence="2">
    <location>
        <position position="1494"/>
    </location>
</feature>
<dbReference type="EC" id="5.6.2.2" evidence="5"/>
<dbReference type="EMBL" id="AB009387">
    <property type="protein sequence ID" value="BAA23778.1"/>
    <property type="molecule type" value="mRNA"/>
</dbReference>
<dbReference type="RefSeq" id="NP_999049.1">
    <property type="nucleotide sequence ID" value="NM_213884.1"/>
</dbReference>
<dbReference type="SMR" id="O46374"/>
<dbReference type="FunCoup" id="O46374">
    <property type="interactions" value="727"/>
</dbReference>
<dbReference type="STRING" id="9823.ENSSSCP00000018518"/>
<dbReference type="PaxDb" id="9823-ENSSSCP00000018518"/>
<dbReference type="PeptideAtlas" id="O46374"/>
<dbReference type="Ensembl" id="ENSSSCT00000019023.5">
    <property type="protein sequence ID" value="ENSSSCP00000018518.4"/>
    <property type="gene ID" value="ENSSSCG00000017473.5"/>
</dbReference>
<dbReference type="Ensembl" id="ENSSSCT00085015168">
    <property type="protein sequence ID" value="ENSSSCP00085010857"/>
    <property type="gene ID" value="ENSSSCG00085008020"/>
</dbReference>
<dbReference type="Ensembl" id="ENSSSCT00090006966">
    <property type="protein sequence ID" value="ENSSSCP00090004200"/>
    <property type="gene ID" value="ENSSSCG00090004008"/>
</dbReference>
<dbReference type="Ensembl" id="ENSSSCT00105065519">
    <property type="protein sequence ID" value="ENSSSCP00105046676"/>
    <property type="gene ID" value="ENSSSCG00105034333"/>
</dbReference>
<dbReference type="Ensembl" id="ENSSSCT00110075171">
    <property type="protein sequence ID" value="ENSSSCP00110053060"/>
    <property type="gene ID" value="ENSSSCG00110039370"/>
</dbReference>
<dbReference type="Ensembl" id="ENSSSCT00115039590">
    <property type="protein sequence ID" value="ENSSSCP00115037294"/>
    <property type="gene ID" value="ENSSSCG00115022375"/>
</dbReference>
<dbReference type="Ensembl" id="ENSSSCT00130027536">
    <property type="protein sequence ID" value="ENSSSCP00130018723"/>
    <property type="gene ID" value="ENSSSCG00130013908"/>
</dbReference>
<dbReference type="GeneID" id="396917"/>
<dbReference type="KEGG" id="ssc:396917"/>
<dbReference type="CTD" id="7153"/>
<dbReference type="VGNC" id="VGNC:94310">
    <property type="gene designation" value="TOP2A"/>
</dbReference>
<dbReference type="eggNOG" id="KOG0355">
    <property type="taxonomic scope" value="Eukaryota"/>
</dbReference>
<dbReference type="GeneTree" id="ENSGT00940000157539"/>
<dbReference type="HOGENOM" id="CLU_001935_1_0_1"/>
<dbReference type="InParanoid" id="O46374"/>
<dbReference type="OMA" id="DVKPHMI"/>
<dbReference type="OrthoDB" id="276498at2759"/>
<dbReference type="TreeFam" id="TF105282"/>
<dbReference type="Reactome" id="R-SSC-4615885">
    <property type="pathway name" value="SUMOylation of DNA replication proteins"/>
</dbReference>
<dbReference type="Proteomes" id="UP000008227">
    <property type="component" value="Chromosome 12"/>
</dbReference>
<dbReference type="Proteomes" id="UP000314985">
    <property type="component" value="Unplaced"/>
</dbReference>
<dbReference type="Proteomes" id="UP000694570">
    <property type="component" value="Unplaced"/>
</dbReference>
<dbReference type="Proteomes" id="UP000694571">
    <property type="component" value="Unplaced"/>
</dbReference>
<dbReference type="Proteomes" id="UP000694720">
    <property type="component" value="Unplaced"/>
</dbReference>
<dbReference type="Proteomes" id="UP000694722">
    <property type="component" value="Unplaced"/>
</dbReference>
<dbReference type="Proteomes" id="UP000694723">
    <property type="component" value="Unplaced"/>
</dbReference>
<dbReference type="Proteomes" id="UP000694724">
    <property type="component" value="Unplaced"/>
</dbReference>
<dbReference type="Proteomes" id="UP000694725">
    <property type="component" value="Unplaced"/>
</dbReference>
<dbReference type="Proteomes" id="UP000694726">
    <property type="component" value="Unplaced"/>
</dbReference>
<dbReference type="Proteomes" id="UP000694727">
    <property type="component" value="Unplaced"/>
</dbReference>
<dbReference type="Proteomes" id="UP000694728">
    <property type="component" value="Unplaced"/>
</dbReference>
<dbReference type="GO" id="GO:0005814">
    <property type="term" value="C:centriole"/>
    <property type="evidence" value="ECO:0007669"/>
    <property type="project" value="Ensembl"/>
</dbReference>
<dbReference type="GO" id="GO:0000775">
    <property type="term" value="C:chromosome, centromeric region"/>
    <property type="evidence" value="ECO:0007669"/>
    <property type="project" value="Ensembl"/>
</dbReference>
<dbReference type="GO" id="GO:0000793">
    <property type="term" value="C:condensed chromosome"/>
    <property type="evidence" value="ECO:0007669"/>
    <property type="project" value="Ensembl"/>
</dbReference>
<dbReference type="GO" id="GO:0005737">
    <property type="term" value="C:cytoplasm"/>
    <property type="evidence" value="ECO:0000250"/>
    <property type="project" value="UniProtKB"/>
</dbReference>
<dbReference type="GO" id="GO:0009330">
    <property type="term" value="C:DNA topoisomerase type II (double strand cut, ATP-hydrolyzing) complex"/>
    <property type="evidence" value="ECO:0007669"/>
    <property type="project" value="Ensembl"/>
</dbReference>
<dbReference type="GO" id="GO:0001673">
    <property type="term" value="C:male germ cell nucleus"/>
    <property type="evidence" value="ECO:0007669"/>
    <property type="project" value="Ensembl"/>
</dbReference>
<dbReference type="GO" id="GO:0000228">
    <property type="term" value="C:nuclear chromosome"/>
    <property type="evidence" value="ECO:0007669"/>
    <property type="project" value="Ensembl"/>
</dbReference>
<dbReference type="GO" id="GO:0005730">
    <property type="term" value="C:nucleolus"/>
    <property type="evidence" value="ECO:0000250"/>
    <property type="project" value="UniProtKB"/>
</dbReference>
<dbReference type="GO" id="GO:0005654">
    <property type="term" value="C:nucleoplasm"/>
    <property type="evidence" value="ECO:0000250"/>
    <property type="project" value="UniProtKB"/>
</dbReference>
<dbReference type="GO" id="GO:0005634">
    <property type="term" value="C:nucleus"/>
    <property type="evidence" value="ECO:0000250"/>
    <property type="project" value="UniProtKB"/>
</dbReference>
<dbReference type="GO" id="GO:1990904">
    <property type="term" value="C:ribonucleoprotein complex"/>
    <property type="evidence" value="ECO:0000250"/>
    <property type="project" value="UniProtKB"/>
</dbReference>
<dbReference type="GO" id="GO:0005524">
    <property type="term" value="F:ATP binding"/>
    <property type="evidence" value="ECO:0007669"/>
    <property type="project" value="UniProtKB-KW"/>
</dbReference>
<dbReference type="GO" id="GO:0003682">
    <property type="term" value="F:chromatin binding"/>
    <property type="evidence" value="ECO:0007669"/>
    <property type="project" value="Ensembl"/>
</dbReference>
<dbReference type="GO" id="GO:0008301">
    <property type="term" value="F:DNA binding, bending"/>
    <property type="evidence" value="ECO:0000250"/>
    <property type="project" value="UniProtKB"/>
</dbReference>
<dbReference type="GO" id="GO:0003918">
    <property type="term" value="F:DNA topoisomerase type II (double strand cut, ATP-hydrolyzing) activity"/>
    <property type="evidence" value="ECO:0000250"/>
    <property type="project" value="UniProtKB"/>
</dbReference>
<dbReference type="GO" id="GO:0000287">
    <property type="term" value="F:magnesium ion binding"/>
    <property type="evidence" value="ECO:0000250"/>
    <property type="project" value="UniProtKB"/>
</dbReference>
<dbReference type="GO" id="GO:0046982">
    <property type="term" value="F:protein heterodimerization activity"/>
    <property type="evidence" value="ECO:0007669"/>
    <property type="project" value="Ensembl"/>
</dbReference>
<dbReference type="GO" id="GO:0042803">
    <property type="term" value="F:protein homodimerization activity"/>
    <property type="evidence" value="ECO:0007669"/>
    <property type="project" value="Ensembl"/>
</dbReference>
<dbReference type="GO" id="GO:0005080">
    <property type="term" value="F:protein kinase C binding"/>
    <property type="evidence" value="ECO:0007669"/>
    <property type="project" value="Ensembl"/>
</dbReference>
<dbReference type="GO" id="GO:0043130">
    <property type="term" value="F:ubiquitin binding"/>
    <property type="evidence" value="ECO:0007669"/>
    <property type="project" value="Ensembl"/>
</dbReference>
<dbReference type="GO" id="GO:0030263">
    <property type="term" value="P:apoptotic chromosome condensation"/>
    <property type="evidence" value="ECO:0007669"/>
    <property type="project" value="Ensembl"/>
</dbReference>
<dbReference type="GO" id="GO:0006325">
    <property type="term" value="P:chromatin organization"/>
    <property type="evidence" value="ECO:0007669"/>
    <property type="project" value="Ensembl"/>
</dbReference>
<dbReference type="GO" id="GO:0007059">
    <property type="term" value="P:chromosome segregation"/>
    <property type="evidence" value="ECO:0007669"/>
    <property type="project" value="Ensembl"/>
</dbReference>
<dbReference type="GO" id="GO:0006974">
    <property type="term" value="P:DNA damage response"/>
    <property type="evidence" value="ECO:0007669"/>
    <property type="project" value="Ensembl"/>
</dbReference>
<dbReference type="GO" id="GO:0006265">
    <property type="term" value="P:DNA topological change"/>
    <property type="evidence" value="ECO:0000250"/>
    <property type="project" value="UniProtKB"/>
</dbReference>
<dbReference type="GO" id="GO:0040016">
    <property type="term" value="P:embryonic cleavage"/>
    <property type="evidence" value="ECO:0007669"/>
    <property type="project" value="Ensembl"/>
</dbReference>
<dbReference type="GO" id="GO:0007143">
    <property type="term" value="P:female meiotic nuclear division"/>
    <property type="evidence" value="ECO:0007669"/>
    <property type="project" value="Ensembl"/>
</dbReference>
<dbReference type="GO" id="GO:0002244">
    <property type="term" value="P:hematopoietic progenitor cell differentiation"/>
    <property type="evidence" value="ECO:0007669"/>
    <property type="project" value="Ensembl"/>
</dbReference>
<dbReference type="GO" id="GO:0043065">
    <property type="term" value="P:positive regulation of apoptotic process"/>
    <property type="evidence" value="ECO:0007669"/>
    <property type="project" value="Ensembl"/>
</dbReference>
<dbReference type="GO" id="GO:0045870">
    <property type="term" value="P:positive regulation of single stranded viral RNA replication via double stranded DNA intermediate"/>
    <property type="evidence" value="ECO:0007669"/>
    <property type="project" value="Ensembl"/>
</dbReference>
<dbReference type="GO" id="GO:0045944">
    <property type="term" value="P:positive regulation of transcription by RNA polymerase II"/>
    <property type="evidence" value="ECO:0007669"/>
    <property type="project" value="Ensembl"/>
</dbReference>
<dbReference type="GO" id="GO:0042752">
    <property type="term" value="P:regulation of circadian rhythm"/>
    <property type="evidence" value="ECO:0000250"/>
    <property type="project" value="UniProtKB"/>
</dbReference>
<dbReference type="GO" id="GO:0048511">
    <property type="term" value="P:rhythmic process"/>
    <property type="evidence" value="ECO:0007669"/>
    <property type="project" value="UniProtKB-KW"/>
</dbReference>
<dbReference type="CDD" id="cd16930">
    <property type="entry name" value="HATPase_TopII-like"/>
    <property type="match status" value="1"/>
</dbReference>
<dbReference type="CDD" id="cd00187">
    <property type="entry name" value="TOP4c"/>
    <property type="match status" value="1"/>
</dbReference>
<dbReference type="CDD" id="cd03481">
    <property type="entry name" value="TopoIIA_Trans_ScTopoIIA"/>
    <property type="match status" value="1"/>
</dbReference>
<dbReference type="CDD" id="cd03365">
    <property type="entry name" value="TOPRIM_TopoIIA"/>
    <property type="match status" value="1"/>
</dbReference>
<dbReference type="FunFam" id="1.10.268.10:FF:000002">
    <property type="entry name" value="DNA topoisomerase 2"/>
    <property type="match status" value="1"/>
</dbReference>
<dbReference type="FunFam" id="3.30.1360.40:FF:000003">
    <property type="entry name" value="DNA topoisomerase 2"/>
    <property type="match status" value="1"/>
</dbReference>
<dbReference type="FunFam" id="3.30.1490.30:FF:000001">
    <property type="entry name" value="DNA topoisomerase 2"/>
    <property type="match status" value="1"/>
</dbReference>
<dbReference type="FunFam" id="3.30.230.10:FF:000008">
    <property type="entry name" value="DNA topoisomerase 2"/>
    <property type="match status" value="1"/>
</dbReference>
<dbReference type="FunFam" id="3.30.565.10:FF:000004">
    <property type="entry name" value="DNA topoisomerase 2"/>
    <property type="match status" value="1"/>
</dbReference>
<dbReference type="FunFam" id="3.40.50.670:FF:000001">
    <property type="entry name" value="DNA topoisomerase 2"/>
    <property type="match status" value="2"/>
</dbReference>
<dbReference type="FunFam" id="3.90.199.10:FF:000002">
    <property type="entry name" value="DNA topoisomerase 2"/>
    <property type="match status" value="1"/>
</dbReference>
<dbReference type="Gene3D" id="3.30.1360.40">
    <property type="match status" value="1"/>
</dbReference>
<dbReference type="Gene3D" id="3.30.1490.30">
    <property type="match status" value="1"/>
</dbReference>
<dbReference type="Gene3D" id="3.30.230.10">
    <property type="match status" value="1"/>
</dbReference>
<dbReference type="Gene3D" id="3.40.50.670">
    <property type="match status" value="1"/>
</dbReference>
<dbReference type="Gene3D" id="3.30.565.10">
    <property type="entry name" value="Histidine kinase-like ATPase, C-terminal domain"/>
    <property type="match status" value="1"/>
</dbReference>
<dbReference type="Gene3D" id="3.90.199.10">
    <property type="entry name" value="Topoisomerase II, domain 5"/>
    <property type="match status" value="1"/>
</dbReference>
<dbReference type="Gene3D" id="1.10.268.10">
    <property type="entry name" value="Topoisomerase, domain 3"/>
    <property type="match status" value="1"/>
</dbReference>
<dbReference type="InterPro" id="IPR050634">
    <property type="entry name" value="DNA_Topoisomerase_II"/>
</dbReference>
<dbReference type="InterPro" id="IPR012542">
    <property type="entry name" value="DTHCT"/>
</dbReference>
<dbReference type="InterPro" id="IPR036890">
    <property type="entry name" value="HATPase_C_sf"/>
</dbReference>
<dbReference type="InterPro" id="IPR020568">
    <property type="entry name" value="Ribosomal_Su5_D2-typ_SF"/>
</dbReference>
<dbReference type="InterPro" id="IPR014721">
    <property type="entry name" value="Ribsml_uS5_D2-typ_fold_subgr"/>
</dbReference>
<dbReference type="InterPro" id="IPR001241">
    <property type="entry name" value="Topo_IIA"/>
</dbReference>
<dbReference type="InterPro" id="IPR013760">
    <property type="entry name" value="Topo_IIA-like_dom_sf"/>
</dbReference>
<dbReference type="InterPro" id="IPR013758">
    <property type="entry name" value="Topo_IIA_A/C_ab"/>
</dbReference>
<dbReference type="InterPro" id="IPR013757">
    <property type="entry name" value="Topo_IIA_A_a_sf"/>
</dbReference>
<dbReference type="InterPro" id="IPR013759">
    <property type="entry name" value="Topo_IIA_B_C"/>
</dbReference>
<dbReference type="InterPro" id="IPR013506">
    <property type="entry name" value="Topo_IIA_bsu_dom2"/>
</dbReference>
<dbReference type="InterPro" id="IPR002205">
    <property type="entry name" value="Topo_IIA_dom_A"/>
</dbReference>
<dbReference type="InterPro" id="IPR001154">
    <property type="entry name" value="TopoII_euk"/>
</dbReference>
<dbReference type="InterPro" id="IPR018522">
    <property type="entry name" value="TopoIIA_CS"/>
</dbReference>
<dbReference type="InterPro" id="IPR031660">
    <property type="entry name" value="TOPRIM_C"/>
</dbReference>
<dbReference type="InterPro" id="IPR006171">
    <property type="entry name" value="TOPRIM_dom"/>
</dbReference>
<dbReference type="InterPro" id="IPR034157">
    <property type="entry name" value="TOPRIM_TopoII"/>
</dbReference>
<dbReference type="PANTHER" id="PTHR10169:SF61">
    <property type="entry name" value="DNA TOPOISOMERASE 2-ALPHA"/>
    <property type="match status" value="1"/>
</dbReference>
<dbReference type="PANTHER" id="PTHR10169">
    <property type="entry name" value="DNA TOPOISOMERASE/GYRASE"/>
    <property type="match status" value="1"/>
</dbReference>
<dbReference type="Pfam" id="PF00204">
    <property type="entry name" value="DNA_gyraseB"/>
    <property type="match status" value="1"/>
</dbReference>
<dbReference type="Pfam" id="PF00521">
    <property type="entry name" value="DNA_topoisoIV"/>
    <property type="match status" value="1"/>
</dbReference>
<dbReference type="Pfam" id="PF08070">
    <property type="entry name" value="DTHCT"/>
    <property type="match status" value="1"/>
</dbReference>
<dbReference type="Pfam" id="PF02518">
    <property type="entry name" value="HATPase_c"/>
    <property type="match status" value="1"/>
</dbReference>
<dbReference type="Pfam" id="PF01751">
    <property type="entry name" value="Toprim"/>
    <property type="match status" value="1"/>
</dbReference>
<dbReference type="Pfam" id="PF16898">
    <property type="entry name" value="TOPRIM_C"/>
    <property type="match status" value="1"/>
</dbReference>
<dbReference type="PRINTS" id="PR01158">
    <property type="entry name" value="TOPISMRASEII"/>
</dbReference>
<dbReference type="PRINTS" id="PR00418">
    <property type="entry name" value="TPI2FAMILY"/>
</dbReference>
<dbReference type="SMART" id="SM00433">
    <property type="entry name" value="TOP2c"/>
    <property type="match status" value="1"/>
</dbReference>
<dbReference type="SMART" id="SM00434">
    <property type="entry name" value="TOP4c"/>
    <property type="match status" value="1"/>
</dbReference>
<dbReference type="SUPFAM" id="SSF55874">
    <property type="entry name" value="ATPase domain of HSP90 chaperone/DNA topoisomerase II/histidine kinase"/>
    <property type="match status" value="1"/>
</dbReference>
<dbReference type="SUPFAM" id="SSF54211">
    <property type="entry name" value="Ribosomal protein S5 domain 2-like"/>
    <property type="match status" value="1"/>
</dbReference>
<dbReference type="SUPFAM" id="SSF56719">
    <property type="entry name" value="Type II DNA topoisomerase"/>
    <property type="match status" value="1"/>
</dbReference>
<dbReference type="PROSITE" id="PS52040">
    <property type="entry name" value="TOPO_IIA"/>
    <property type="match status" value="1"/>
</dbReference>
<dbReference type="PROSITE" id="PS00177">
    <property type="entry name" value="TOPOISOMERASE_II"/>
    <property type="match status" value="1"/>
</dbReference>
<dbReference type="PROSITE" id="PS50880">
    <property type="entry name" value="TOPRIM"/>
    <property type="match status" value="1"/>
</dbReference>
<organism>
    <name type="scientific">Sus scrofa</name>
    <name type="common">Pig</name>
    <dbReference type="NCBI Taxonomy" id="9823"/>
    <lineage>
        <taxon>Eukaryota</taxon>
        <taxon>Metazoa</taxon>
        <taxon>Chordata</taxon>
        <taxon>Craniata</taxon>
        <taxon>Vertebrata</taxon>
        <taxon>Euteleostomi</taxon>
        <taxon>Mammalia</taxon>
        <taxon>Eutheria</taxon>
        <taxon>Laurasiatheria</taxon>
        <taxon>Artiodactyla</taxon>
        <taxon>Suina</taxon>
        <taxon>Suidae</taxon>
        <taxon>Sus</taxon>
    </lineage>
</organism>